<feature type="propeptide" id="PRO_0000397598" description="Removed in mature form; by autocatalysis" evidence="1">
    <location>
        <begin position="1"/>
        <end position="52"/>
    </location>
</feature>
<feature type="chain" id="PRO_0000397599" description="Proteasome subunit beta 2">
    <location>
        <begin position="53"/>
        <end position="280"/>
    </location>
</feature>
<feature type="active site" description="Nucleophile" evidence="1">
    <location>
        <position position="53"/>
    </location>
</feature>
<organism>
    <name type="scientific">Thermomonospora curvata (strain ATCC 19995 / DSM 43183 / JCM 3096 / KCTC 9072 / NBRC 15933 / NCIMB 10081 / Henssen B9)</name>
    <dbReference type="NCBI Taxonomy" id="471852"/>
    <lineage>
        <taxon>Bacteria</taxon>
        <taxon>Bacillati</taxon>
        <taxon>Actinomycetota</taxon>
        <taxon>Actinomycetes</taxon>
        <taxon>Streptosporangiales</taxon>
        <taxon>Thermomonosporaceae</taxon>
        <taxon>Thermomonospora</taxon>
    </lineage>
</organism>
<sequence length="280" mass="30170">MTERERGQGLPAEFFAVGTASFVELLSRTAPQLLPVNRVRDGSHPMPDIPHGTTIVAVRYPEGVMLAGDRRATSGNLIAQKDLEKVHRADEHSAVAMAGTVGLALEMIRLLQVELEHYEKLQSAKLSLPGKARRLGAVIRANLAHAMQGLAVVPVFAGYDLDAGVGRIYNYDITGMPQESRDFHAEGSGSPFARGALKKLYRPDLTEAEAAAVCVQALYDAAEDDAATAGPDLARRIFPTIATVTADGYRRLPEQEVAELTESVVGARRQRPDGPVAPLR</sequence>
<dbReference type="EC" id="3.4.25.1" evidence="1"/>
<dbReference type="EMBL" id="CP001738">
    <property type="protein sequence ID" value="ACY98005.1"/>
    <property type="molecule type" value="Genomic_DNA"/>
</dbReference>
<dbReference type="RefSeq" id="WP_012852789.1">
    <property type="nucleotide sequence ID" value="NC_013510.1"/>
</dbReference>
<dbReference type="SMR" id="D1A3V2"/>
<dbReference type="STRING" id="471852.Tcur_2442"/>
<dbReference type="KEGG" id="tcu:Tcur_2442"/>
<dbReference type="eggNOG" id="COG0638">
    <property type="taxonomic scope" value="Bacteria"/>
</dbReference>
<dbReference type="HOGENOM" id="CLU_035750_2_0_11"/>
<dbReference type="OrthoDB" id="5174038at2"/>
<dbReference type="UniPathway" id="UPA00997"/>
<dbReference type="Proteomes" id="UP000001918">
    <property type="component" value="Chromosome"/>
</dbReference>
<dbReference type="GO" id="GO:0005737">
    <property type="term" value="C:cytoplasm"/>
    <property type="evidence" value="ECO:0007669"/>
    <property type="project" value="UniProtKB-SubCell"/>
</dbReference>
<dbReference type="GO" id="GO:0019774">
    <property type="term" value="C:proteasome core complex, beta-subunit complex"/>
    <property type="evidence" value="ECO:0007669"/>
    <property type="project" value="UniProtKB-UniRule"/>
</dbReference>
<dbReference type="GO" id="GO:0004298">
    <property type="term" value="F:threonine-type endopeptidase activity"/>
    <property type="evidence" value="ECO:0007669"/>
    <property type="project" value="UniProtKB-UniRule"/>
</dbReference>
<dbReference type="GO" id="GO:0019941">
    <property type="term" value="P:modification-dependent protein catabolic process"/>
    <property type="evidence" value="ECO:0007669"/>
    <property type="project" value="UniProtKB-UniRule"/>
</dbReference>
<dbReference type="GO" id="GO:0010498">
    <property type="term" value="P:proteasomal protein catabolic process"/>
    <property type="evidence" value="ECO:0007669"/>
    <property type="project" value="UniProtKB-UniRule"/>
</dbReference>
<dbReference type="CDD" id="cd01906">
    <property type="entry name" value="proteasome_protease_HslV"/>
    <property type="match status" value="1"/>
</dbReference>
<dbReference type="Gene3D" id="3.60.20.10">
    <property type="entry name" value="Glutamine Phosphoribosylpyrophosphate, subunit 1, domain 1"/>
    <property type="match status" value="1"/>
</dbReference>
<dbReference type="HAMAP" id="MF_02113_B">
    <property type="entry name" value="Proteasome_B_B"/>
    <property type="match status" value="1"/>
</dbReference>
<dbReference type="InterPro" id="IPR029055">
    <property type="entry name" value="Ntn_hydrolases_N"/>
</dbReference>
<dbReference type="InterPro" id="IPR000243">
    <property type="entry name" value="Pept_T1A_subB"/>
</dbReference>
<dbReference type="InterPro" id="IPR001353">
    <property type="entry name" value="Proteasome_sua/b"/>
</dbReference>
<dbReference type="InterPro" id="IPR023333">
    <property type="entry name" value="Proteasome_suB-type"/>
</dbReference>
<dbReference type="InterPro" id="IPR022483">
    <property type="entry name" value="PSB_actinobac"/>
</dbReference>
<dbReference type="NCBIfam" id="TIGR03690">
    <property type="entry name" value="20S_bact_beta"/>
    <property type="match status" value="1"/>
</dbReference>
<dbReference type="PANTHER" id="PTHR32194:SF0">
    <property type="entry name" value="ATP-DEPENDENT PROTEASE SUBUNIT HSLV"/>
    <property type="match status" value="1"/>
</dbReference>
<dbReference type="PANTHER" id="PTHR32194">
    <property type="entry name" value="METALLOPROTEASE TLDD"/>
    <property type="match status" value="1"/>
</dbReference>
<dbReference type="Pfam" id="PF00227">
    <property type="entry name" value="Proteasome"/>
    <property type="match status" value="1"/>
</dbReference>
<dbReference type="PRINTS" id="PR00141">
    <property type="entry name" value="PROTEASOME"/>
</dbReference>
<dbReference type="SUPFAM" id="SSF56235">
    <property type="entry name" value="N-terminal nucleophile aminohydrolases (Ntn hydrolases)"/>
    <property type="match status" value="1"/>
</dbReference>
<dbReference type="PROSITE" id="PS51476">
    <property type="entry name" value="PROTEASOME_BETA_2"/>
    <property type="match status" value="1"/>
</dbReference>
<comment type="function">
    <text evidence="1">Component of the proteasome core, a large protease complex with broad specificity involved in protein degradation.</text>
</comment>
<comment type="catalytic activity">
    <reaction evidence="1">
        <text>Cleavage of peptide bonds with very broad specificity.</text>
        <dbReference type="EC" id="3.4.25.1"/>
    </reaction>
</comment>
<comment type="activity regulation">
    <text evidence="1">The formation of the proteasomal ATPase ARC-20S proteasome complex, likely via the docking of the C-termini of ARC into the intersubunit pockets in the alpha-rings, may trigger opening of the gate for substrate entry. Interconversion between the open-gate and close-gate conformations leads to a dynamic regulation of the 20S proteasome proteolysis activity.</text>
</comment>
<comment type="pathway">
    <text evidence="1">Protein degradation; proteasomal Pup-dependent pathway.</text>
</comment>
<comment type="subunit">
    <text evidence="1">The 20S proteasome core is composed of 14 alpha and 14 beta subunits that assemble into four stacked heptameric rings, resulting in a barrel-shaped structure. The two inner rings, each composed of seven catalytic beta subunits, are sandwiched by two outer rings, each composed of seven alpha subunits. The catalytic chamber with the active sites is on the inside of the barrel. Has a gated structure, the ends of the cylinder being occluded by the N-termini of the alpha-subunits. Is capped by the proteasome-associated ATPase, ARC.</text>
</comment>
<comment type="subcellular location">
    <subcellularLocation>
        <location evidence="1">Cytoplasm</location>
    </subcellularLocation>
</comment>
<comment type="similarity">
    <text evidence="1">Belongs to the peptidase T1B family.</text>
</comment>
<gene>
    <name evidence="1" type="primary">prcB2</name>
    <name type="ordered locus">Tcur_2442</name>
</gene>
<reference key="1">
    <citation type="journal article" date="2011" name="Stand. Genomic Sci.">
        <title>Complete genome sequence of Thermomonospora curvata type strain (B9).</title>
        <authorList>
            <person name="Chertkov O."/>
            <person name="Sikorski J."/>
            <person name="Nolan M."/>
            <person name="Lapidus A."/>
            <person name="Lucas S."/>
            <person name="Del Rio T.G."/>
            <person name="Tice H."/>
            <person name="Cheng J.F."/>
            <person name="Goodwin L."/>
            <person name="Pitluck S."/>
            <person name="Liolios K."/>
            <person name="Ivanova N."/>
            <person name="Mavromatis K."/>
            <person name="Mikhailova N."/>
            <person name="Ovchinnikova G."/>
            <person name="Pati A."/>
            <person name="Chen A."/>
            <person name="Palaniappan K."/>
            <person name="Djao O.D."/>
            <person name="Land M."/>
            <person name="Hauser L."/>
            <person name="Chang Y.J."/>
            <person name="Jeffries C.D."/>
            <person name="Brettin T."/>
            <person name="Han C."/>
            <person name="Detter J.C."/>
            <person name="Rohde M."/>
            <person name="Goeker M."/>
            <person name="Woyke T."/>
            <person name="Bristow J."/>
            <person name="Eisen J.A."/>
            <person name="Markowitz V."/>
            <person name="Hugenholtz P."/>
            <person name="Klenk H.P."/>
            <person name="Kyrpides N.C."/>
        </authorList>
    </citation>
    <scope>NUCLEOTIDE SEQUENCE [LARGE SCALE GENOMIC DNA]</scope>
    <source>
        <strain>ATCC 19995 / DSM 43183 / JCM 3096 / KCTC 9072 / NBRC 15933 / NCIMB 10081 / Henssen B9</strain>
    </source>
</reference>
<keyword id="KW-0068">Autocatalytic cleavage</keyword>
<keyword id="KW-0963">Cytoplasm</keyword>
<keyword id="KW-0378">Hydrolase</keyword>
<keyword id="KW-0645">Protease</keyword>
<keyword id="KW-0647">Proteasome</keyword>
<keyword id="KW-1185">Reference proteome</keyword>
<keyword id="KW-0888">Threonine protease</keyword>
<keyword id="KW-0865">Zymogen</keyword>
<name>PSB2_THECD</name>
<evidence type="ECO:0000255" key="1">
    <source>
        <dbReference type="HAMAP-Rule" id="MF_02113"/>
    </source>
</evidence>
<proteinExistence type="inferred from homology"/>
<accession>D1A3V2</accession>
<protein>
    <recommendedName>
        <fullName evidence="1">Proteasome subunit beta 2</fullName>
        <ecNumber evidence="1">3.4.25.1</ecNumber>
    </recommendedName>
    <alternativeName>
        <fullName evidence="1">20S proteasome beta subunit 2</fullName>
    </alternativeName>
    <alternativeName>
        <fullName evidence="1">Proteasome core protein PrcB 2</fullName>
    </alternativeName>
</protein>